<keyword id="KW-0963">Cytoplasm</keyword>
<keyword id="KW-0378">Hydrolase</keyword>
<keyword id="KW-0479">Metal-binding</keyword>
<keyword id="KW-0533">Nickel</keyword>
<keyword id="KW-1185">Reference proteome</keyword>
<comment type="catalytic activity">
    <reaction evidence="1">
        <text>urea + 2 H2O + H(+) = hydrogencarbonate + 2 NH4(+)</text>
        <dbReference type="Rhea" id="RHEA:20557"/>
        <dbReference type="ChEBI" id="CHEBI:15377"/>
        <dbReference type="ChEBI" id="CHEBI:15378"/>
        <dbReference type="ChEBI" id="CHEBI:16199"/>
        <dbReference type="ChEBI" id="CHEBI:17544"/>
        <dbReference type="ChEBI" id="CHEBI:28938"/>
        <dbReference type="EC" id="3.5.1.5"/>
    </reaction>
</comment>
<comment type="cofactor">
    <cofactor evidence="1">
        <name>Ni cation</name>
        <dbReference type="ChEBI" id="CHEBI:25516"/>
    </cofactor>
    <text evidence="1">Binds 2 nickel ions per subunit.</text>
</comment>
<comment type="pathway">
    <text evidence="1">Nitrogen metabolism; urea degradation; CO(2) and NH(3) from urea (urease route): step 1/1.</text>
</comment>
<comment type="subunit">
    <text evidence="1">Heterotrimer of UreA (gamma), UreB (beta) and UreC (alpha) subunits. Three heterotrimers associate to form the active enzyme.</text>
</comment>
<comment type="subcellular location">
    <subcellularLocation>
        <location evidence="1">Cytoplasm</location>
    </subcellularLocation>
</comment>
<comment type="PTM">
    <text evidence="1">Carboxylation allows a single lysine to coordinate two nickel ions.</text>
</comment>
<comment type="similarity">
    <text evidence="1">Belongs to the metallo-dependent hydrolases superfamily. Urease alpha subunit family.</text>
</comment>
<proteinExistence type="inferred from homology"/>
<evidence type="ECO:0000255" key="1">
    <source>
        <dbReference type="HAMAP-Rule" id="MF_01953"/>
    </source>
</evidence>
<evidence type="ECO:0000305" key="2"/>
<protein>
    <recommendedName>
        <fullName evidence="1">Urease subunit alpha</fullName>
        <ecNumber evidence="1">3.5.1.5</ecNumber>
    </recommendedName>
    <alternativeName>
        <fullName evidence="1">Urea amidohydrolase subunit alpha</fullName>
    </alternativeName>
</protein>
<dbReference type="EC" id="3.5.1.5" evidence="1"/>
<dbReference type="EMBL" id="S69145">
    <property type="protein sequence ID" value="AAB30138.1"/>
    <property type="molecule type" value="Genomic_DNA"/>
</dbReference>
<dbReference type="EMBL" id="AL591688">
    <property type="protein sequence ID" value="CAC47049.1"/>
    <property type="molecule type" value="Genomic_DNA"/>
</dbReference>
<dbReference type="PIR" id="S42607">
    <property type="entry name" value="S42607"/>
</dbReference>
<dbReference type="RefSeq" id="NP_386576.1">
    <property type="nucleotide sequence ID" value="NC_003047.1"/>
</dbReference>
<dbReference type="RefSeq" id="WP_010969961.1">
    <property type="nucleotide sequence ID" value="NC_003047.1"/>
</dbReference>
<dbReference type="SMR" id="P42885"/>
<dbReference type="MEROPS" id="M38.982"/>
<dbReference type="EnsemblBacteria" id="CAC47049">
    <property type="protein sequence ID" value="CAC47049"/>
    <property type="gene ID" value="SMc01837"/>
</dbReference>
<dbReference type="KEGG" id="sme:SMc01837"/>
<dbReference type="PATRIC" id="fig|266834.11.peg.3959"/>
<dbReference type="eggNOG" id="COG0804">
    <property type="taxonomic scope" value="Bacteria"/>
</dbReference>
<dbReference type="HOGENOM" id="CLU_000980_0_0_5"/>
<dbReference type="OrthoDB" id="9802793at2"/>
<dbReference type="BioCyc" id="MetaCyc:MONOMER-11554"/>
<dbReference type="UniPathway" id="UPA00258">
    <property type="reaction ID" value="UER00370"/>
</dbReference>
<dbReference type="Proteomes" id="UP000001976">
    <property type="component" value="Chromosome"/>
</dbReference>
<dbReference type="GO" id="GO:0005737">
    <property type="term" value="C:cytoplasm"/>
    <property type="evidence" value="ECO:0007669"/>
    <property type="project" value="UniProtKB-SubCell"/>
</dbReference>
<dbReference type="GO" id="GO:0016151">
    <property type="term" value="F:nickel cation binding"/>
    <property type="evidence" value="ECO:0007669"/>
    <property type="project" value="UniProtKB-UniRule"/>
</dbReference>
<dbReference type="GO" id="GO:0009039">
    <property type="term" value="F:urease activity"/>
    <property type="evidence" value="ECO:0007669"/>
    <property type="project" value="UniProtKB-UniRule"/>
</dbReference>
<dbReference type="GO" id="GO:0043419">
    <property type="term" value="P:urea catabolic process"/>
    <property type="evidence" value="ECO:0007669"/>
    <property type="project" value="UniProtKB-UniRule"/>
</dbReference>
<dbReference type="CDD" id="cd00375">
    <property type="entry name" value="Urease_alpha"/>
    <property type="match status" value="1"/>
</dbReference>
<dbReference type="Gene3D" id="3.20.20.140">
    <property type="entry name" value="Metal-dependent hydrolases"/>
    <property type="match status" value="1"/>
</dbReference>
<dbReference type="Gene3D" id="2.30.40.10">
    <property type="entry name" value="Urease, subunit C, domain 1"/>
    <property type="match status" value="1"/>
</dbReference>
<dbReference type="HAMAP" id="MF_01953">
    <property type="entry name" value="Urease_alpha"/>
    <property type="match status" value="1"/>
</dbReference>
<dbReference type="InterPro" id="IPR006680">
    <property type="entry name" value="Amidohydro-rel"/>
</dbReference>
<dbReference type="InterPro" id="IPR011059">
    <property type="entry name" value="Metal-dep_hydrolase_composite"/>
</dbReference>
<dbReference type="InterPro" id="IPR032466">
    <property type="entry name" value="Metal_Hydrolase"/>
</dbReference>
<dbReference type="InterPro" id="IPR011612">
    <property type="entry name" value="Urease_alpha_N_dom"/>
</dbReference>
<dbReference type="InterPro" id="IPR050112">
    <property type="entry name" value="Urease_alpha_subunit"/>
</dbReference>
<dbReference type="InterPro" id="IPR017950">
    <property type="entry name" value="Urease_AS"/>
</dbReference>
<dbReference type="InterPro" id="IPR005848">
    <property type="entry name" value="Urease_asu"/>
</dbReference>
<dbReference type="InterPro" id="IPR017951">
    <property type="entry name" value="Urease_asu_c"/>
</dbReference>
<dbReference type="InterPro" id="IPR029754">
    <property type="entry name" value="Urease_Ni-bd"/>
</dbReference>
<dbReference type="NCBIfam" id="NF009685">
    <property type="entry name" value="PRK13206.1"/>
    <property type="match status" value="1"/>
</dbReference>
<dbReference type="NCBIfam" id="NF009686">
    <property type="entry name" value="PRK13207.1"/>
    <property type="match status" value="1"/>
</dbReference>
<dbReference type="NCBIfam" id="TIGR01792">
    <property type="entry name" value="urease_alph"/>
    <property type="match status" value="1"/>
</dbReference>
<dbReference type="PANTHER" id="PTHR43440">
    <property type="entry name" value="UREASE"/>
    <property type="match status" value="1"/>
</dbReference>
<dbReference type="PANTHER" id="PTHR43440:SF1">
    <property type="entry name" value="UREASE"/>
    <property type="match status" value="1"/>
</dbReference>
<dbReference type="Pfam" id="PF01979">
    <property type="entry name" value="Amidohydro_1"/>
    <property type="match status" value="1"/>
</dbReference>
<dbReference type="Pfam" id="PF00449">
    <property type="entry name" value="Urease_alpha"/>
    <property type="match status" value="1"/>
</dbReference>
<dbReference type="PRINTS" id="PR01752">
    <property type="entry name" value="UREASE"/>
</dbReference>
<dbReference type="SUPFAM" id="SSF51338">
    <property type="entry name" value="Composite domain of metallo-dependent hydrolases"/>
    <property type="match status" value="2"/>
</dbReference>
<dbReference type="SUPFAM" id="SSF51556">
    <property type="entry name" value="Metallo-dependent hydrolases"/>
    <property type="match status" value="1"/>
</dbReference>
<dbReference type="PROSITE" id="PS01120">
    <property type="entry name" value="UREASE_1"/>
    <property type="match status" value="1"/>
</dbReference>
<dbReference type="PROSITE" id="PS00145">
    <property type="entry name" value="UREASE_2"/>
    <property type="match status" value="1"/>
</dbReference>
<dbReference type="PROSITE" id="PS51368">
    <property type="entry name" value="UREASE_3"/>
    <property type="match status" value="1"/>
</dbReference>
<sequence length="570" mass="60769">MSYRMSRAAYANMFGPTVGDKVRLADTELFIEVEKDFTTHGEEVKFGGGKVIRDGMGQSQVTREGGAVDTVITNALILDHWGIVKADIGLKDGRIAAIGKAGNPDMQPGVTIIVGPGTEVIAGEGKIVTAGGMDSHIHFICPQQIEEALMSGLTCMLGGGTGPAHGTLATTCTPGPWHIARMIEAADAFPMNLAFAGKGNASLPGALVEMVLGGATSLKLHEDWGTTPAAIDCCLSVADEYDVQVMIHTDTLNESGFVEDTIAAIKGRTIHAYHTEGAGGGHAPDIIRICGQPNVIPSSTNPTRPYTVNTLAEHLDMLMVCHHLSPTIPEDIAFAESRIRKETIAAEDILHDIGAFSIISSDSQAMGRVGEVAIRTWQTADKMKRQRGRLKEETGDNDNFRVKRYIAKYTINPAIAHGLSHEIGSLEVGKRADLVLWNPAFFGVKPDMVLLGGTIAAAPMGDPNASIPTPQPVHYRPMFGAYGRSRTNSSVTFVSQASLDAGLAGRLGVAKELVAVQNTRGGIGKASMIHNSLTPHIEVDPETYEVRADGELLTCEPATVLPMAQRYFLF</sequence>
<reference key="1">
    <citation type="journal article" date="1994" name="Mol. Gen. Genet.">
        <title>A 4.6 kb DNA region of Rhizobium meliloti involved in determining urease and hydrogenase activities carries the structural genes for urease (ureA, ureB, ureC) interrupted by other open reading frames.</title>
        <authorList>
            <person name="Miksch G."/>
            <person name="Arnold W."/>
            <person name="Lentzsch P."/>
            <person name="Priefer U.B."/>
            <person name="Puehler A."/>
        </authorList>
    </citation>
    <scope>NUCLEOTIDE SEQUENCE [GENOMIC DNA]</scope>
    <source>
        <strain>AK631</strain>
    </source>
</reference>
<reference key="2">
    <citation type="journal article" date="2001" name="Proc. Natl. Acad. Sci. U.S.A.">
        <title>Analysis of the chromosome sequence of the legume symbiont Sinorhizobium meliloti strain 1021.</title>
        <authorList>
            <person name="Capela D."/>
            <person name="Barloy-Hubler F."/>
            <person name="Gouzy J."/>
            <person name="Bothe G."/>
            <person name="Ampe F."/>
            <person name="Batut J."/>
            <person name="Boistard P."/>
            <person name="Becker A."/>
            <person name="Boutry M."/>
            <person name="Cadieu E."/>
            <person name="Dreano S."/>
            <person name="Gloux S."/>
            <person name="Godrie T."/>
            <person name="Goffeau A."/>
            <person name="Kahn D."/>
            <person name="Kiss E."/>
            <person name="Lelaure V."/>
            <person name="Masuy D."/>
            <person name="Pohl T."/>
            <person name="Portetelle D."/>
            <person name="Puehler A."/>
            <person name="Purnelle B."/>
            <person name="Ramsperger U."/>
            <person name="Renard C."/>
            <person name="Thebault P."/>
            <person name="Vandenbol M."/>
            <person name="Weidner S."/>
            <person name="Galibert F."/>
        </authorList>
    </citation>
    <scope>NUCLEOTIDE SEQUENCE [LARGE SCALE GENOMIC DNA]</scope>
    <source>
        <strain>1021</strain>
    </source>
</reference>
<reference key="3">
    <citation type="journal article" date="2001" name="Science">
        <title>The composite genome of the legume symbiont Sinorhizobium meliloti.</title>
        <authorList>
            <person name="Galibert F."/>
            <person name="Finan T.M."/>
            <person name="Long S.R."/>
            <person name="Puehler A."/>
            <person name="Abola P."/>
            <person name="Ampe F."/>
            <person name="Barloy-Hubler F."/>
            <person name="Barnett M.J."/>
            <person name="Becker A."/>
            <person name="Boistard P."/>
            <person name="Bothe G."/>
            <person name="Boutry M."/>
            <person name="Bowser L."/>
            <person name="Buhrmester J."/>
            <person name="Cadieu E."/>
            <person name="Capela D."/>
            <person name="Chain P."/>
            <person name="Cowie A."/>
            <person name="Davis R.W."/>
            <person name="Dreano S."/>
            <person name="Federspiel N.A."/>
            <person name="Fisher R.F."/>
            <person name="Gloux S."/>
            <person name="Godrie T."/>
            <person name="Goffeau A."/>
            <person name="Golding B."/>
            <person name="Gouzy J."/>
            <person name="Gurjal M."/>
            <person name="Hernandez-Lucas I."/>
            <person name="Hong A."/>
            <person name="Huizar L."/>
            <person name="Hyman R.W."/>
            <person name="Jones T."/>
            <person name="Kahn D."/>
            <person name="Kahn M.L."/>
            <person name="Kalman S."/>
            <person name="Keating D.H."/>
            <person name="Kiss E."/>
            <person name="Komp C."/>
            <person name="Lelaure V."/>
            <person name="Masuy D."/>
            <person name="Palm C."/>
            <person name="Peck M.C."/>
            <person name="Pohl T.M."/>
            <person name="Portetelle D."/>
            <person name="Purnelle B."/>
            <person name="Ramsperger U."/>
            <person name="Surzycki R."/>
            <person name="Thebault P."/>
            <person name="Vandenbol M."/>
            <person name="Vorhoelter F.J."/>
            <person name="Weidner S."/>
            <person name="Wells D.H."/>
            <person name="Wong K."/>
            <person name="Yeh K.-C."/>
            <person name="Batut J."/>
        </authorList>
    </citation>
    <scope>NUCLEOTIDE SEQUENCE [LARGE SCALE GENOMIC DNA]</scope>
    <source>
        <strain>1021</strain>
    </source>
</reference>
<feature type="chain" id="PRO_0000067551" description="Urease subunit alpha">
    <location>
        <begin position="1"/>
        <end position="570"/>
    </location>
</feature>
<feature type="domain" description="Urease" evidence="1">
    <location>
        <begin position="131"/>
        <end position="570"/>
    </location>
</feature>
<feature type="active site" description="Proton donor" evidence="1">
    <location>
        <position position="322"/>
    </location>
</feature>
<feature type="binding site" evidence="1">
    <location>
        <position position="136"/>
    </location>
    <ligand>
        <name>Ni(2+)</name>
        <dbReference type="ChEBI" id="CHEBI:49786"/>
        <label>1</label>
    </ligand>
</feature>
<feature type="binding site" evidence="1">
    <location>
        <position position="138"/>
    </location>
    <ligand>
        <name>Ni(2+)</name>
        <dbReference type="ChEBI" id="CHEBI:49786"/>
        <label>1</label>
    </ligand>
</feature>
<feature type="binding site" description="via carbamate group" evidence="1">
    <location>
        <position position="219"/>
    </location>
    <ligand>
        <name>Ni(2+)</name>
        <dbReference type="ChEBI" id="CHEBI:49786"/>
        <label>1</label>
    </ligand>
</feature>
<feature type="binding site" description="via carbamate group" evidence="1">
    <location>
        <position position="219"/>
    </location>
    <ligand>
        <name>Ni(2+)</name>
        <dbReference type="ChEBI" id="CHEBI:49786"/>
        <label>2</label>
    </ligand>
</feature>
<feature type="binding site" evidence="1">
    <location>
        <position position="221"/>
    </location>
    <ligand>
        <name>substrate</name>
    </ligand>
</feature>
<feature type="binding site" evidence="1">
    <location>
        <position position="248"/>
    </location>
    <ligand>
        <name>Ni(2+)</name>
        <dbReference type="ChEBI" id="CHEBI:49786"/>
        <label>2</label>
    </ligand>
</feature>
<feature type="binding site" evidence="1">
    <location>
        <position position="274"/>
    </location>
    <ligand>
        <name>Ni(2+)</name>
        <dbReference type="ChEBI" id="CHEBI:49786"/>
        <label>2</label>
    </ligand>
</feature>
<feature type="binding site" evidence="1">
    <location>
        <position position="362"/>
    </location>
    <ligand>
        <name>Ni(2+)</name>
        <dbReference type="ChEBI" id="CHEBI:49786"/>
        <label>1</label>
    </ligand>
</feature>
<feature type="modified residue" description="N6-carboxylysine" evidence="1">
    <location>
        <position position="219"/>
    </location>
</feature>
<feature type="sequence conflict" description="In Ref. 1; AAB30138." evidence="2" ref="1">
    <original>Q</original>
    <variation>P</variation>
    <location>
        <position position="496"/>
    </location>
</feature>
<name>URE1_RHIME</name>
<organism>
    <name type="scientific">Rhizobium meliloti (strain 1021)</name>
    <name type="common">Ensifer meliloti</name>
    <name type="synonym">Sinorhizobium meliloti</name>
    <dbReference type="NCBI Taxonomy" id="266834"/>
    <lineage>
        <taxon>Bacteria</taxon>
        <taxon>Pseudomonadati</taxon>
        <taxon>Pseudomonadota</taxon>
        <taxon>Alphaproteobacteria</taxon>
        <taxon>Hyphomicrobiales</taxon>
        <taxon>Rhizobiaceae</taxon>
        <taxon>Sinorhizobium/Ensifer group</taxon>
        <taxon>Sinorhizobium</taxon>
    </lineage>
</organism>
<gene>
    <name evidence="1" type="primary">ureC</name>
    <name type="ordered locus">R02470</name>
    <name type="ORF">SMc01837</name>
</gene>
<accession>P42885</accession>